<proteinExistence type="evidence at protein level"/>
<feature type="signal peptide" evidence="2">
    <location>
        <begin position="1"/>
        <end position="24"/>
    </location>
</feature>
<feature type="chain" id="PRO_5004326969" description="Cytochrome c550">
    <location>
        <begin position="25"/>
        <end position="145"/>
    </location>
</feature>
<feature type="domain" description="Cytochrome c" evidence="1">
    <location>
        <begin position="60"/>
        <end position="142"/>
    </location>
</feature>
<feature type="binding site" description="covalent" evidence="1">
    <location>
        <position position="73"/>
    </location>
    <ligand>
        <name>heme c</name>
        <dbReference type="ChEBI" id="CHEBI:61717"/>
    </ligand>
</feature>
<feature type="binding site" description="covalent" evidence="1">
    <location>
        <position position="76"/>
    </location>
    <ligand>
        <name>heme c</name>
        <dbReference type="ChEBI" id="CHEBI:61717"/>
    </ligand>
</feature>
<feature type="binding site" description="axial binding residue" evidence="1">
    <location>
        <position position="77"/>
    </location>
    <ligand>
        <name>heme c</name>
        <dbReference type="ChEBI" id="CHEBI:61717"/>
    </ligand>
    <ligandPart>
        <name>Fe</name>
        <dbReference type="ChEBI" id="CHEBI:18248"/>
    </ligandPart>
</feature>
<feature type="binding site" description="axial binding residue" evidence="7">
    <location>
        <position position="119"/>
    </location>
    <ligand>
        <name>heme c</name>
        <dbReference type="ChEBI" id="CHEBI:61717"/>
    </ligand>
    <ligandPart>
        <name>Fe</name>
        <dbReference type="ChEBI" id="CHEBI:18248"/>
    </ligandPart>
</feature>
<feature type="sequence conflict" description="In Ref. 3; CAA08895." evidence="6" ref="3">
    <original>V</original>
    <variation>A</variation>
    <location>
        <position position="6"/>
    </location>
</feature>
<dbReference type="EMBL" id="AF068264">
    <property type="protein sequence ID" value="AAC79658.1"/>
    <property type="molecule type" value="Genomic_DNA"/>
</dbReference>
<dbReference type="EMBL" id="AE004091">
    <property type="protein sequence ID" value="AAG05371.1"/>
    <property type="molecule type" value="Genomic_DNA"/>
</dbReference>
<dbReference type="EMBL" id="AJ009858">
    <property type="protein sequence ID" value="CAA08895.1"/>
    <property type="molecule type" value="Genomic_DNA"/>
</dbReference>
<dbReference type="PIR" id="G83396">
    <property type="entry name" value="G83396"/>
</dbReference>
<dbReference type="RefSeq" id="NP_250673.1">
    <property type="nucleotide sequence ID" value="NC_002516.2"/>
</dbReference>
<dbReference type="SMR" id="Q9I2C5"/>
<dbReference type="STRING" id="208964.PA1983"/>
<dbReference type="PaxDb" id="208964-PA1983"/>
<dbReference type="DNASU" id="880387"/>
<dbReference type="GeneID" id="880387"/>
<dbReference type="KEGG" id="pae:PA1983"/>
<dbReference type="PATRIC" id="fig|208964.12.peg.2067"/>
<dbReference type="PseudoCAP" id="PA1983"/>
<dbReference type="HOGENOM" id="CLU_084762_1_0_6"/>
<dbReference type="InParanoid" id="Q9I2C5"/>
<dbReference type="OrthoDB" id="9797504at2"/>
<dbReference type="BioCyc" id="PAER208964:G1FZ6-2021-MONOMER"/>
<dbReference type="Proteomes" id="UP000002438">
    <property type="component" value="Chromosome"/>
</dbReference>
<dbReference type="GO" id="GO:0042597">
    <property type="term" value="C:periplasmic space"/>
    <property type="evidence" value="ECO:0007669"/>
    <property type="project" value="UniProtKB-SubCell"/>
</dbReference>
<dbReference type="GO" id="GO:0009055">
    <property type="term" value="F:electron transfer activity"/>
    <property type="evidence" value="ECO:0007669"/>
    <property type="project" value="InterPro"/>
</dbReference>
<dbReference type="GO" id="GO:0020037">
    <property type="term" value="F:heme binding"/>
    <property type="evidence" value="ECO:0007669"/>
    <property type="project" value="InterPro"/>
</dbReference>
<dbReference type="GO" id="GO:0046872">
    <property type="term" value="F:metal ion binding"/>
    <property type="evidence" value="ECO:0007669"/>
    <property type="project" value="UniProtKB-KW"/>
</dbReference>
<dbReference type="FunFam" id="1.10.760.10:FF:000028">
    <property type="entry name" value="Cytochrome c-550 PedF"/>
    <property type="match status" value="1"/>
</dbReference>
<dbReference type="Gene3D" id="1.10.760.10">
    <property type="entry name" value="Cytochrome c-like domain"/>
    <property type="match status" value="1"/>
</dbReference>
<dbReference type="InterPro" id="IPR030991">
    <property type="entry name" value="c550_proteobact"/>
</dbReference>
<dbReference type="InterPro" id="IPR009056">
    <property type="entry name" value="Cyt_c-like_dom"/>
</dbReference>
<dbReference type="InterPro" id="IPR036909">
    <property type="entry name" value="Cyt_c-like_dom_sf"/>
</dbReference>
<dbReference type="InterPro" id="IPR051811">
    <property type="entry name" value="Cytochrome_c550/c551-like"/>
</dbReference>
<dbReference type="NCBIfam" id="TIGR04494">
    <property type="entry name" value="c550_PedF"/>
    <property type="match status" value="1"/>
</dbReference>
<dbReference type="PANTHER" id="PTHR37823">
    <property type="entry name" value="CYTOCHROME C-553-LIKE"/>
    <property type="match status" value="1"/>
</dbReference>
<dbReference type="PANTHER" id="PTHR37823:SF4">
    <property type="entry name" value="MENAQUINOL-CYTOCHROME C REDUCTASE CYTOCHROME B_C SUBUNIT"/>
    <property type="match status" value="1"/>
</dbReference>
<dbReference type="Pfam" id="PF13442">
    <property type="entry name" value="Cytochrome_CBB3"/>
    <property type="match status" value="1"/>
</dbReference>
<dbReference type="SUPFAM" id="SSF46626">
    <property type="entry name" value="Cytochrome c"/>
    <property type="match status" value="1"/>
</dbReference>
<dbReference type="PROSITE" id="PS51007">
    <property type="entry name" value="CYTC"/>
    <property type="match status" value="1"/>
</dbReference>
<evidence type="ECO:0000255" key="1">
    <source>
        <dbReference type="PROSITE-ProRule" id="PRU00433"/>
    </source>
</evidence>
<evidence type="ECO:0000269" key="2">
    <source>
    </source>
</evidence>
<evidence type="ECO:0000269" key="3">
    <source>
    </source>
</evidence>
<evidence type="ECO:0000269" key="4">
    <source>
    </source>
</evidence>
<evidence type="ECO:0000303" key="5">
    <source>
    </source>
</evidence>
<evidence type="ECO:0000305" key="6"/>
<evidence type="ECO:0000305" key="7">
    <source>
    </source>
</evidence>
<evidence type="ECO:0000312" key="8">
    <source>
        <dbReference type="EMBL" id="AAG05371.1"/>
    </source>
</evidence>
<evidence type="ECO:0000312" key="9">
    <source>
        <dbReference type="EMBL" id="CAA08895.1"/>
    </source>
</evidence>
<keyword id="KW-0903">Direct protein sequencing</keyword>
<keyword id="KW-0249">Electron transport</keyword>
<keyword id="KW-0349">Heme</keyword>
<keyword id="KW-0408">Iron</keyword>
<keyword id="KW-0479">Metal-binding</keyword>
<keyword id="KW-0574">Periplasm</keyword>
<keyword id="KW-1185">Reference proteome</keyword>
<keyword id="KW-0732">Signal</keyword>
<keyword id="KW-0813">Transport</keyword>
<accession>Q9I2C5</accession>
<accession>Q7B310</accession>
<protein>
    <recommendedName>
        <fullName evidence="5">Cytochrome c550</fullName>
    </recommendedName>
</protein>
<sequence>MNKNNVLRGLLVLAGLSLSSLALAHGDVTPQAVDTKGLEPLGKEWRDTNPYRKPYAKHDLAVEIGASAYNQNCARCHGLEAKSGGIAPDLRLLETGAEGDEWFKERVINGAVRDGAVYMPKMADFISQEGLWAIRSYLESVHVDE</sequence>
<comment type="function">
    <text evidence="2 4">Is an essential component of the ethanol oxidation system that allows P.aeruginosa to grow on ethanol as the sole carbon and energy source. Is the direct electron acceptor of the quinoprotein ethanol dehydrogenase (QEDH).</text>
</comment>
<comment type="biophysicochemical properties">
    <redoxPotential>
        <text evidence="4">E(0) is 280 mV.</text>
    </redoxPotential>
</comment>
<comment type="pathway">
    <text evidence="2">Alcohol metabolism; ethanol degradation; acetate from ethanol.</text>
</comment>
<comment type="subunit">
    <text evidence="3 4">Monomer (PubMed:8380982). Interacts with the quinoprotein ethanol dehydrogenase (QEDH) ExaA (PubMed:19224199).</text>
</comment>
<comment type="subcellular location">
    <subcellularLocation>
        <location evidence="2">Periplasm</location>
    </subcellularLocation>
</comment>
<comment type="induction">
    <text evidence="4 7">Induced by growth on ethanol.</text>
</comment>
<comment type="PTM">
    <text evidence="2 4">Binds 1 heme group per subunit.</text>
</comment>
<comment type="disruption phenotype">
    <text evidence="2">Cells lacking this gene are completely unable to grow on ethanol as the sole carbon source.</text>
</comment>
<name>CY550_PSEAE</name>
<reference key="1">
    <citation type="journal article" date="1999" name="Microbiology">
        <title>Cytochrome c550 is an essential component of the quinoprotein ethanol oxidation system in Pseudomonas aeruginosa: cloning and sequencing of the genes encoding cytochrome c550 and an adjacent acetaldehyde dehydrogenase.</title>
        <authorList>
            <person name="Schobert M."/>
            <person name="Goerisch H."/>
        </authorList>
    </citation>
    <scope>NUCLEOTIDE SEQUENCE [GENOMIC DNA]</scope>
    <scope>PROTEIN SEQUENCE OF 25-57</scope>
    <scope>FUNCTION</scope>
    <scope>HEME-BINDING</scope>
    <scope>SUBCELLULAR LOCATION</scope>
    <scope>DISRUPTION PHENOTYPE</scope>
    <scope>PATHWAY</scope>
    <scope>INDUCTION</scope>
    <source>
        <strain>ATCC 17933</strain>
    </source>
</reference>
<reference key="2">
    <citation type="journal article" date="2000" name="Nature">
        <title>Complete genome sequence of Pseudomonas aeruginosa PAO1, an opportunistic pathogen.</title>
        <authorList>
            <person name="Stover C.K."/>
            <person name="Pham X.-Q.T."/>
            <person name="Erwin A.L."/>
            <person name="Mizoguchi S.D."/>
            <person name="Warrener P."/>
            <person name="Hickey M.J."/>
            <person name="Brinkman F.S.L."/>
            <person name="Hufnagle W.O."/>
            <person name="Kowalik D.J."/>
            <person name="Lagrou M."/>
            <person name="Garber R.L."/>
            <person name="Goltry L."/>
            <person name="Tolentino E."/>
            <person name="Westbrock-Wadman S."/>
            <person name="Yuan Y."/>
            <person name="Brody L.L."/>
            <person name="Coulter S.N."/>
            <person name="Folger K.R."/>
            <person name="Kas A."/>
            <person name="Larbig K."/>
            <person name="Lim R.M."/>
            <person name="Smith K.A."/>
            <person name="Spencer D.H."/>
            <person name="Wong G.K.-S."/>
            <person name="Wu Z."/>
            <person name="Paulsen I.T."/>
            <person name="Reizer J."/>
            <person name="Saier M.H. Jr."/>
            <person name="Hancock R.E.W."/>
            <person name="Lory S."/>
            <person name="Olson M.V."/>
        </authorList>
    </citation>
    <scope>NUCLEOTIDE SEQUENCE [LARGE SCALE GENOMIC DNA]</scope>
    <source>
        <strain>ATCC 15692 / DSM 22644 / CIP 104116 / JCM 14847 / LMG 12228 / 1C / PRS 101 / PAO1</strain>
    </source>
</reference>
<reference key="3">
    <citation type="journal article" date="1998" name="Eur. J. Biochem.">
        <title>Quinoprotein ethanol dehydrogenase of Pseudomonas aeruginosa is a homodimer: sequence of the gene and deduced structural properties of the enzyme.</title>
        <authorList>
            <person name="Diehl A."/>
            <person name="von Wintzingerode F."/>
            <person name="Gorisch H."/>
        </authorList>
    </citation>
    <scope>NUCLEOTIDE SEQUENCE [GENOMIC DNA] OF 1-44</scope>
    <source>
        <strain>ATCC 17933</strain>
    </source>
</reference>
<reference key="4">
    <citation type="journal article" date="1993" name="Biochem. J.">
        <title>Cytochrome c550 from Pseudomonas aeruginosa.</title>
        <authorList>
            <person name="Reichmann P."/>
            <person name="Goerisch H."/>
        </authorList>
    </citation>
    <scope>FUNCTION</scope>
    <scope>BIOPHYSICOCHEMICAL PROPERTIES</scope>
    <scope>INDUCTION</scope>
    <scope>HEME-BINDING</scope>
    <scope>SUBUNIT</scope>
    <source>
        <strain>ATCC 17933</strain>
    </source>
</reference>
<reference key="5">
    <citation type="journal article" date="2009" name="Arch. Microbiol.">
        <title>Quinoprotein ethanol dehydrogenase from Pseudomonas aeruginosa: the unusual disulfide ring formed by adjacent cysteine residues is essential for efficient electron transfer to cytochrome c550.</title>
        <authorList>
            <person name="Mennenga B."/>
            <person name="Kay C.W."/>
            <person name="Goerisch H."/>
        </authorList>
    </citation>
    <scope>INTERACTION WITH EXAA</scope>
    <source>
        <strain>ATCC 17933</strain>
    </source>
</reference>
<organism>
    <name type="scientific">Pseudomonas aeruginosa (strain ATCC 15692 / DSM 22644 / CIP 104116 / JCM 14847 / LMG 12228 / 1C / PRS 101 / PAO1)</name>
    <dbReference type="NCBI Taxonomy" id="208964"/>
    <lineage>
        <taxon>Bacteria</taxon>
        <taxon>Pseudomonadati</taxon>
        <taxon>Pseudomonadota</taxon>
        <taxon>Gammaproteobacteria</taxon>
        <taxon>Pseudomonadales</taxon>
        <taxon>Pseudomonadaceae</taxon>
        <taxon>Pseudomonas</taxon>
    </lineage>
</organism>
<gene>
    <name evidence="5 8 9" type="primary">exaB</name>
    <name evidence="8" type="ordered locus">PA1983</name>
</gene>